<evidence type="ECO:0000255" key="1">
    <source>
        <dbReference type="HAMAP-Rule" id="MF_00005"/>
    </source>
</evidence>
<accession>B5ED13</accession>
<organism>
    <name type="scientific">Citrifermentans bemidjiense (strain ATCC BAA-1014 / DSM 16622 / JCM 12645 / Bem)</name>
    <name type="common">Geobacter bemidjiensis</name>
    <dbReference type="NCBI Taxonomy" id="404380"/>
    <lineage>
        <taxon>Bacteria</taxon>
        <taxon>Pseudomonadati</taxon>
        <taxon>Thermodesulfobacteriota</taxon>
        <taxon>Desulfuromonadia</taxon>
        <taxon>Geobacterales</taxon>
        <taxon>Geobacteraceae</taxon>
        <taxon>Citrifermentans</taxon>
    </lineage>
</organism>
<protein>
    <recommendedName>
        <fullName evidence="1">Argininosuccinate synthase</fullName>
        <ecNumber evidence="1">6.3.4.5</ecNumber>
    </recommendedName>
    <alternativeName>
        <fullName evidence="1">Citrulline--aspartate ligase</fullName>
    </alternativeName>
</protein>
<proteinExistence type="inferred from homology"/>
<comment type="catalytic activity">
    <reaction evidence="1">
        <text>L-citrulline + L-aspartate + ATP = 2-(N(omega)-L-arginino)succinate + AMP + diphosphate + H(+)</text>
        <dbReference type="Rhea" id="RHEA:10932"/>
        <dbReference type="ChEBI" id="CHEBI:15378"/>
        <dbReference type="ChEBI" id="CHEBI:29991"/>
        <dbReference type="ChEBI" id="CHEBI:30616"/>
        <dbReference type="ChEBI" id="CHEBI:33019"/>
        <dbReference type="ChEBI" id="CHEBI:57472"/>
        <dbReference type="ChEBI" id="CHEBI:57743"/>
        <dbReference type="ChEBI" id="CHEBI:456215"/>
        <dbReference type="EC" id="6.3.4.5"/>
    </reaction>
</comment>
<comment type="pathway">
    <text evidence="1">Amino-acid biosynthesis; L-arginine biosynthesis; L-arginine from L-ornithine and carbamoyl phosphate: step 2/3.</text>
</comment>
<comment type="subunit">
    <text evidence="1">Homotetramer.</text>
</comment>
<comment type="subcellular location">
    <subcellularLocation>
        <location evidence="1">Cytoplasm</location>
    </subcellularLocation>
</comment>
<comment type="similarity">
    <text evidence="1">Belongs to the argininosuccinate synthase family. Type 1 subfamily.</text>
</comment>
<gene>
    <name evidence="1" type="primary">argG</name>
    <name type="ordered locus">Gbem_3638</name>
</gene>
<keyword id="KW-0028">Amino-acid biosynthesis</keyword>
<keyword id="KW-0055">Arginine biosynthesis</keyword>
<keyword id="KW-0067">ATP-binding</keyword>
<keyword id="KW-0963">Cytoplasm</keyword>
<keyword id="KW-0436">Ligase</keyword>
<keyword id="KW-0547">Nucleotide-binding</keyword>
<keyword id="KW-1185">Reference proteome</keyword>
<dbReference type="EC" id="6.3.4.5" evidence="1"/>
<dbReference type="EMBL" id="CP001124">
    <property type="protein sequence ID" value="ACH40630.1"/>
    <property type="molecule type" value="Genomic_DNA"/>
</dbReference>
<dbReference type="RefSeq" id="WP_012532067.1">
    <property type="nucleotide sequence ID" value="NC_011146.1"/>
</dbReference>
<dbReference type="SMR" id="B5ED13"/>
<dbReference type="STRING" id="404380.Gbem_3638"/>
<dbReference type="KEGG" id="gbm:Gbem_3638"/>
<dbReference type="eggNOG" id="COG0137">
    <property type="taxonomic scope" value="Bacteria"/>
</dbReference>
<dbReference type="HOGENOM" id="CLU_032784_4_2_7"/>
<dbReference type="OrthoDB" id="9801641at2"/>
<dbReference type="UniPathway" id="UPA00068">
    <property type="reaction ID" value="UER00113"/>
</dbReference>
<dbReference type="Proteomes" id="UP000008825">
    <property type="component" value="Chromosome"/>
</dbReference>
<dbReference type="GO" id="GO:0005737">
    <property type="term" value="C:cytoplasm"/>
    <property type="evidence" value="ECO:0007669"/>
    <property type="project" value="UniProtKB-SubCell"/>
</dbReference>
<dbReference type="GO" id="GO:0004055">
    <property type="term" value="F:argininosuccinate synthase activity"/>
    <property type="evidence" value="ECO:0007669"/>
    <property type="project" value="UniProtKB-UniRule"/>
</dbReference>
<dbReference type="GO" id="GO:0005524">
    <property type="term" value="F:ATP binding"/>
    <property type="evidence" value="ECO:0007669"/>
    <property type="project" value="UniProtKB-UniRule"/>
</dbReference>
<dbReference type="GO" id="GO:0000053">
    <property type="term" value="P:argininosuccinate metabolic process"/>
    <property type="evidence" value="ECO:0007669"/>
    <property type="project" value="TreeGrafter"/>
</dbReference>
<dbReference type="GO" id="GO:0006526">
    <property type="term" value="P:L-arginine biosynthetic process"/>
    <property type="evidence" value="ECO:0007669"/>
    <property type="project" value="UniProtKB-UniRule"/>
</dbReference>
<dbReference type="GO" id="GO:0000050">
    <property type="term" value="P:urea cycle"/>
    <property type="evidence" value="ECO:0007669"/>
    <property type="project" value="TreeGrafter"/>
</dbReference>
<dbReference type="CDD" id="cd01999">
    <property type="entry name" value="ASS"/>
    <property type="match status" value="1"/>
</dbReference>
<dbReference type="FunFam" id="3.40.50.620:FF:000019">
    <property type="entry name" value="Argininosuccinate synthase"/>
    <property type="match status" value="1"/>
</dbReference>
<dbReference type="FunFam" id="3.90.1260.10:FF:000007">
    <property type="entry name" value="Argininosuccinate synthase"/>
    <property type="match status" value="1"/>
</dbReference>
<dbReference type="Gene3D" id="3.90.1260.10">
    <property type="entry name" value="Argininosuccinate synthetase, chain A, domain 2"/>
    <property type="match status" value="1"/>
</dbReference>
<dbReference type="Gene3D" id="3.40.50.620">
    <property type="entry name" value="HUPs"/>
    <property type="match status" value="1"/>
</dbReference>
<dbReference type="Gene3D" id="1.20.5.470">
    <property type="entry name" value="Single helix bin"/>
    <property type="match status" value="1"/>
</dbReference>
<dbReference type="HAMAP" id="MF_00005">
    <property type="entry name" value="Arg_succ_synth_type1"/>
    <property type="match status" value="1"/>
</dbReference>
<dbReference type="InterPro" id="IPR048268">
    <property type="entry name" value="Arginosuc_syn_C"/>
</dbReference>
<dbReference type="InterPro" id="IPR048267">
    <property type="entry name" value="Arginosuc_syn_N"/>
</dbReference>
<dbReference type="InterPro" id="IPR001518">
    <property type="entry name" value="Arginosuc_synth"/>
</dbReference>
<dbReference type="InterPro" id="IPR018223">
    <property type="entry name" value="Arginosuc_synth_CS"/>
</dbReference>
<dbReference type="InterPro" id="IPR023434">
    <property type="entry name" value="Arginosuc_synth_type_1_subfam"/>
</dbReference>
<dbReference type="InterPro" id="IPR024074">
    <property type="entry name" value="AS_cat/multimer_dom_body"/>
</dbReference>
<dbReference type="InterPro" id="IPR014729">
    <property type="entry name" value="Rossmann-like_a/b/a_fold"/>
</dbReference>
<dbReference type="NCBIfam" id="TIGR00032">
    <property type="entry name" value="argG"/>
    <property type="match status" value="1"/>
</dbReference>
<dbReference type="NCBIfam" id="NF001770">
    <property type="entry name" value="PRK00509.1"/>
    <property type="match status" value="1"/>
</dbReference>
<dbReference type="PANTHER" id="PTHR11587">
    <property type="entry name" value="ARGININOSUCCINATE SYNTHASE"/>
    <property type="match status" value="1"/>
</dbReference>
<dbReference type="PANTHER" id="PTHR11587:SF2">
    <property type="entry name" value="ARGININOSUCCINATE SYNTHASE"/>
    <property type="match status" value="1"/>
</dbReference>
<dbReference type="Pfam" id="PF20979">
    <property type="entry name" value="Arginosuc_syn_C"/>
    <property type="match status" value="1"/>
</dbReference>
<dbReference type="Pfam" id="PF00764">
    <property type="entry name" value="Arginosuc_synth"/>
    <property type="match status" value="1"/>
</dbReference>
<dbReference type="SUPFAM" id="SSF52402">
    <property type="entry name" value="Adenine nucleotide alpha hydrolases-like"/>
    <property type="match status" value="1"/>
</dbReference>
<dbReference type="SUPFAM" id="SSF69864">
    <property type="entry name" value="Argininosuccinate synthetase, C-terminal domain"/>
    <property type="match status" value="1"/>
</dbReference>
<dbReference type="PROSITE" id="PS00564">
    <property type="entry name" value="ARGININOSUCCIN_SYN_1"/>
    <property type="match status" value="1"/>
</dbReference>
<dbReference type="PROSITE" id="PS00565">
    <property type="entry name" value="ARGININOSUCCIN_SYN_2"/>
    <property type="match status" value="1"/>
</dbReference>
<reference key="1">
    <citation type="submission" date="2008-07" db="EMBL/GenBank/DDBJ databases">
        <title>Complete sequence of Geobacter bemidjiensis BEM.</title>
        <authorList>
            <consortium name="US DOE Joint Genome Institute"/>
            <person name="Lucas S."/>
            <person name="Copeland A."/>
            <person name="Lapidus A."/>
            <person name="Glavina del Rio T."/>
            <person name="Dalin E."/>
            <person name="Tice H."/>
            <person name="Bruce D."/>
            <person name="Goodwin L."/>
            <person name="Pitluck S."/>
            <person name="Kiss H."/>
            <person name="Brettin T."/>
            <person name="Detter J.C."/>
            <person name="Han C."/>
            <person name="Kuske C.R."/>
            <person name="Schmutz J."/>
            <person name="Larimer F."/>
            <person name="Land M."/>
            <person name="Hauser L."/>
            <person name="Kyrpides N."/>
            <person name="Lykidis A."/>
            <person name="Lovley D."/>
            <person name="Richardson P."/>
        </authorList>
    </citation>
    <scope>NUCLEOTIDE SEQUENCE [LARGE SCALE GENOMIC DNA]</scope>
    <source>
        <strain>ATCC BAA-1014 / DSM 16622 / JCM 12645 / Bem</strain>
    </source>
</reference>
<name>ASSY_CITBB</name>
<sequence>MAKKEVKKIVLAYSGGLDTSIILKWLKNEYGCEVVTFSADLGQGDELEPVREKAFKTGADKVYIDDLREEFVRDFVYPMFRANAIYEGSYLLGTSIARPLIAKRQMEIAKIEGCDAVSHGATGKGNDQVRFELAYYHFNPGITVVAPWREWKLNSRQALINYAKRNDIPIPITKKRPWSSDRNLLHISFEGGILEDTWLEPPENMFVLTKAPEKAPNKPQYIEIEFEKGNAVAVDGVRMSPAELLAHLNTIGGEHGIGRVDLLENRSVGMKSRGVYETPGGTILREAHMAVEQITMDREVMHLRDSLIPRYAEMIYNGYWFSPEREMMQCMIDESQKTVNGVARLKLYKGHCRTVGRKSESDSLFNLDFATFEKDQVYNQADAEGFIKLNSLRLRIRSLMLANKNK</sequence>
<feature type="chain" id="PRO_1000089038" description="Argininosuccinate synthase">
    <location>
        <begin position="1"/>
        <end position="406"/>
    </location>
</feature>
<feature type="binding site" evidence="1">
    <location>
        <begin position="12"/>
        <end position="20"/>
    </location>
    <ligand>
        <name>ATP</name>
        <dbReference type="ChEBI" id="CHEBI:30616"/>
    </ligand>
</feature>
<feature type="binding site" evidence="1">
    <location>
        <position position="39"/>
    </location>
    <ligand>
        <name>ATP</name>
        <dbReference type="ChEBI" id="CHEBI:30616"/>
    </ligand>
</feature>
<feature type="binding site" evidence="1">
    <location>
        <position position="90"/>
    </location>
    <ligand>
        <name>L-citrulline</name>
        <dbReference type="ChEBI" id="CHEBI:57743"/>
    </ligand>
</feature>
<feature type="binding site" evidence="1">
    <location>
        <position position="95"/>
    </location>
    <ligand>
        <name>L-citrulline</name>
        <dbReference type="ChEBI" id="CHEBI:57743"/>
    </ligand>
</feature>
<feature type="binding site" evidence="1">
    <location>
        <position position="120"/>
    </location>
    <ligand>
        <name>ATP</name>
        <dbReference type="ChEBI" id="CHEBI:30616"/>
    </ligand>
</feature>
<feature type="binding site" evidence="1">
    <location>
        <position position="122"/>
    </location>
    <ligand>
        <name>L-aspartate</name>
        <dbReference type="ChEBI" id="CHEBI:29991"/>
    </ligand>
</feature>
<feature type="binding site" evidence="1">
    <location>
        <position position="126"/>
    </location>
    <ligand>
        <name>L-aspartate</name>
        <dbReference type="ChEBI" id="CHEBI:29991"/>
    </ligand>
</feature>
<feature type="binding site" evidence="1">
    <location>
        <position position="126"/>
    </location>
    <ligand>
        <name>L-citrulline</name>
        <dbReference type="ChEBI" id="CHEBI:57743"/>
    </ligand>
</feature>
<feature type="binding site" evidence="1">
    <location>
        <position position="127"/>
    </location>
    <ligand>
        <name>L-aspartate</name>
        <dbReference type="ChEBI" id="CHEBI:29991"/>
    </ligand>
</feature>
<feature type="binding site" evidence="1">
    <location>
        <position position="130"/>
    </location>
    <ligand>
        <name>L-citrulline</name>
        <dbReference type="ChEBI" id="CHEBI:57743"/>
    </ligand>
</feature>
<feature type="binding site" evidence="1">
    <location>
        <position position="179"/>
    </location>
    <ligand>
        <name>L-citrulline</name>
        <dbReference type="ChEBI" id="CHEBI:57743"/>
    </ligand>
</feature>
<feature type="binding site" evidence="1">
    <location>
        <position position="188"/>
    </location>
    <ligand>
        <name>L-citrulline</name>
        <dbReference type="ChEBI" id="CHEBI:57743"/>
    </ligand>
</feature>
<feature type="binding site" evidence="1">
    <location>
        <position position="264"/>
    </location>
    <ligand>
        <name>L-citrulline</name>
        <dbReference type="ChEBI" id="CHEBI:57743"/>
    </ligand>
</feature>
<feature type="binding site" evidence="1">
    <location>
        <position position="276"/>
    </location>
    <ligand>
        <name>L-citrulline</name>
        <dbReference type="ChEBI" id="CHEBI:57743"/>
    </ligand>
</feature>